<organism>
    <name type="scientific">Anaeromyxobacter sp. (strain Fw109-5)</name>
    <dbReference type="NCBI Taxonomy" id="404589"/>
    <lineage>
        <taxon>Bacteria</taxon>
        <taxon>Pseudomonadati</taxon>
        <taxon>Myxococcota</taxon>
        <taxon>Myxococcia</taxon>
        <taxon>Myxococcales</taxon>
        <taxon>Cystobacterineae</taxon>
        <taxon>Anaeromyxobacteraceae</taxon>
        <taxon>Anaeromyxobacter</taxon>
    </lineage>
</organism>
<sequence>MPSFDVVSELNLMEVENAFNQARKEILQRFDFKGTSTDLERDKDENVVVKAGSEGRAEAALQVLMEKLAKRGVPLEGLDPQKLEPASGGSVRQLVKLKRGLKQEDAKRIVALMKESGLKVQAAIQGEAVRISGKKKDDLQAAMQAIRTGGLGVPLQFQNFRE</sequence>
<accession>A7H6G9</accession>
<proteinExistence type="inferred from homology"/>
<protein>
    <recommendedName>
        <fullName evidence="1">Nucleotide-binding protein Anae109_0095</fullName>
    </recommendedName>
</protein>
<dbReference type="EMBL" id="CP000769">
    <property type="protein sequence ID" value="ABS24315.1"/>
    <property type="molecule type" value="Genomic_DNA"/>
</dbReference>
<dbReference type="RefSeq" id="WP_011984421.1">
    <property type="nucleotide sequence ID" value="NC_009675.1"/>
</dbReference>
<dbReference type="SMR" id="A7H6G9"/>
<dbReference type="STRING" id="404589.Anae109_0095"/>
<dbReference type="KEGG" id="afw:Anae109_0095"/>
<dbReference type="eggNOG" id="COG1666">
    <property type="taxonomic scope" value="Bacteria"/>
</dbReference>
<dbReference type="HOGENOM" id="CLU_099839_1_0_7"/>
<dbReference type="OrthoDB" id="9801447at2"/>
<dbReference type="Proteomes" id="UP000006382">
    <property type="component" value="Chromosome"/>
</dbReference>
<dbReference type="GO" id="GO:0005829">
    <property type="term" value="C:cytosol"/>
    <property type="evidence" value="ECO:0007669"/>
    <property type="project" value="TreeGrafter"/>
</dbReference>
<dbReference type="GO" id="GO:0000166">
    <property type="term" value="F:nucleotide binding"/>
    <property type="evidence" value="ECO:0007669"/>
    <property type="project" value="TreeGrafter"/>
</dbReference>
<dbReference type="CDD" id="cd11740">
    <property type="entry name" value="YajQ_like"/>
    <property type="match status" value="1"/>
</dbReference>
<dbReference type="Gene3D" id="3.30.70.860">
    <property type="match status" value="1"/>
</dbReference>
<dbReference type="Gene3D" id="3.30.70.990">
    <property type="entry name" value="YajQ-like, domain 2"/>
    <property type="match status" value="1"/>
</dbReference>
<dbReference type="HAMAP" id="MF_00632">
    <property type="entry name" value="YajQ"/>
    <property type="match status" value="1"/>
</dbReference>
<dbReference type="InterPro" id="IPR007551">
    <property type="entry name" value="DUF520"/>
</dbReference>
<dbReference type="InterPro" id="IPR035571">
    <property type="entry name" value="UPF0234-like_C"/>
</dbReference>
<dbReference type="InterPro" id="IPR035570">
    <property type="entry name" value="UPF0234_N"/>
</dbReference>
<dbReference type="InterPro" id="IPR036183">
    <property type="entry name" value="YajQ-like_sf"/>
</dbReference>
<dbReference type="NCBIfam" id="NF003819">
    <property type="entry name" value="PRK05412.1"/>
    <property type="match status" value="1"/>
</dbReference>
<dbReference type="PANTHER" id="PTHR30476">
    <property type="entry name" value="UPF0234 PROTEIN YAJQ"/>
    <property type="match status" value="1"/>
</dbReference>
<dbReference type="PANTHER" id="PTHR30476:SF0">
    <property type="entry name" value="UPF0234 PROTEIN YAJQ"/>
    <property type="match status" value="1"/>
</dbReference>
<dbReference type="Pfam" id="PF04461">
    <property type="entry name" value="DUF520"/>
    <property type="match status" value="1"/>
</dbReference>
<dbReference type="SUPFAM" id="SSF89963">
    <property type="entry name" value="YajQ-like"/>
    <property type="match status" value="2"/>
</dbReference>
<name>Y095_ANADF</name>
<comment type="function">
    <text evidence="1">Nucleotide-binding protein.</text>
</comment>
<comment type="similarity">
    <text evidence="1">Belongs to the YajQ family.</text>
</comment>
<evidence type="ECO:0000255" key="1">
    <source>
        <dbReference type="HAMAP-Rule" id="MF_00632"/>
    </source>
</evidence>
<gene>
    <name type="ordered locus">Anae109_0095</name>
</gene>
<feature type="chain" id="PRO_1000051714" description="Nucleotide-binding protein Anae109_0095">
    <location>
        <begin position="1"/>
        <end position="162"/>
    </location>
</feature>
<reference key="1">
    <citation type="journal article" date="2015" name="Genome Announc.">
        <title>Complete genome sequence of Anaeromyxobacter sp. Fw109-5, an anaerobic, metal-reducing bacterium isolated from a contaminated subsurface environment.</title>
        <authorList>
            <person name="Hwang C."/>
            <person name="Copeland A."/>
            <person name="Lucas S."/>
            <person name="Lapidus A."/>
            <person name="Barry K."/>
            <person name="Glavina Del Rio T."/>
            <person name="Dalin E."/>
            <person name="Tice H."/>
            <person name="Pitluck S."/>
            <person name="Sims D."/>
            <person name="Brettin T."/>
            <person name="Bruce D.C."/>
            <person name="Detter J.C."/>
            <person name="Han C.S."/>
            <person name="Schmutz J."/>
            <person name="Larimer F.W."/>
            <person name="Land M.L."/>
            <person name="Hauser L.J."/>
            <person name="Kyrpides N."/>
            <person name="Lykidis A."/>
            <person name="Richardson P."/>
            <person name="Belieav A."/>
            <person name="Sanford R.A."/>
            <person name="Loeffler F.E."/>
            <person name="Fields M.W."/>
        </authorList>
    </citation>
    <scope>NUCLEOTIDE SEQUENCE [LARGE SCALE GENOMIC DNA]</scope>
    <source>
        <strain>Fw109-5</strain>
    </source>
</reference>
<keyword id="KW-0547">Nucleotide-binding</keyword>
<keyword id="KW-1185">Reference proteome</keyword>